<name>QUEC_HALSA</name>
<protein>
    <recommendedName>
        <fullName evidence="1">7-cyano-7-deazaguanine synthase</fullName>
        <ecNumber evidence="1">6.3.4.20</ecNumber>
    </recommendedName>
    <alternativeName>
        <fullName evidence="1">7-cyano-7-carbaguanine synthase</fullName>
    </alternativeName>
    <alternativeName>
        <fullName evidence="1">Archaeosine biosynthesis protein QueC</fullName>
    </alternativeName>
    <alternativeName>
        <fullName evidence="1">PreQ(0) synthase</fullName>
    </alternativeName>
</protein>
<feature type="chain" id="PRO_0000246975" description="7-cyano-7-deazaguanine synthase">
    <location>
        <begin position="1"/>
        <end position="229"/>
    </location>
</feature>
<feature type="binding site" evidence="1">
    <location>
        <begin position="10"/>
        <end position="20"/>
    </location>
    <ligand>
        <name>ATP</name>
        <dbReference type="ChEBI" id="CHEBI:30616"/>
    </ligand>
</feature>
<feature type="binding site" evidence="1">
    <location>
        <position position="190"/>
    </location>
    <ligand>
        <name>Zn(2+)</name>
        <dbReference type="ChEBI" id="CHEBI:29105"/>
    </ligand>
</feature>
<feature type="binding site" evidence="1">
    <location>
        <position position="198"/>
    </location>
    <ligand>
        <name>Zn(2+)</name>
        <dbReference type="ChEBI" id="CHEBI:29105"/>
    </ligand>
</feature>
<feature type="binding site" evidence="1">
    <location>
        <position position="201"/>
    </location>
    <ligand>
        <name>Zn(2+)</name>
        <dbReference type="ChEBI" id="CHEBI:29105"/>
    </ligand>
</feature>
<feature type="binding site" evidence="1">
    <location>
        <position position="204"/>
    </location>
    <ligand>
        <name>Zn(2+)</name>
        <dbReference type="ChEBI" id="CHEBI:29105"/>
    </ligand>
</feature>
<geneLocation type="plasmid">
    <name>pNRC200</name>
</geneLocation>
<comment type="function">
    <text evidence="1">Catalyzes the ATP-dependent conversion of 7-carboxy-7-deazaguanine (CDG) to 7-cyano-7-deazaguanine (preQ(0)).</text>
</comment>
<comment type="catalytic activity">
    <reaction evidence="1">
        <text>7-carboxy-7-deazaguanine + NH4(+) + ATP = 7-cyano-7-deazaguanine + ADP + phosphate + H2O + H(+)</text>
        <dbReference type="Rhea" id="RHEA:27982"/>
        <dbReference type="ChEBI" id="CHEBI:15377"/>
        <dbReference type="ChEBI" id="CHEBI:15378"/>
        <dbReference type="ChEBI" id="CHEBI:28938"/>
        <dbReference type="ChEBI" id="CHEBI:30616"/>
        <dbReference type="ChEBI" id="CHEBI:43474"/>
        <dbReference type="ChEBI" id="CHEBI:45075"/>
        <dbReference type="ChEBI" id="CHEBI:61036"/>
        <dbReference type="ChEBI" id="CHEBI:456216"/>
        <dbReference type="EC" id="6.3.4.20"/>
    </reaction>
</comment>
<comment type="cofactor">
    <cofactor evidence="1">
        <name>Zn(2+)</name>
        <dbReference type="ChEBI" id="CHEBI:29105"/>
    </cofactor>
    <text evidence="1">Binds 1 zinc ion per subunit.</text>
</comment>
<comment type="pathway">
    <text evidence="1">Purine metabolism; 7-cyano-7-deazaguanine biosynthesis.</text>
</comment>
<comment type="similarity">
    <text evidence="1">Belongs to the QueC family.</text>
</comment>
<dbReference type="EC" id="6.3.4.20" evidence="1"/>
<dbReference type="EMBL" id="AE004438">
    <property type="protein sequence ID" value="AAG20938.1"/>
    <property type="molecule type" value="Genomic_DNA"/>
</dbReference>
<dbReference type="RefSeq" id="WP_010904151.1">
    <property type="nucleotide sequence ID" value="NZ_BK010831.1"/>
</dbReference>
<dbReference type="SMR" id="Q9HHN8"/>
<dbReference type="GeneID" id="68695242"/>
<dbReference type="KEGG" id="hal:VNG_6303G"/>
<dbReference type="PATRIC" id="fig|64091.14.peg.2284"/>
<dbReference type="HOGENOM" id="CLU_081854_1_0_2"/>
<dbReference type="InParanoid" id="Q9HHN8"/>
<dbReference type="OrthoDB" id="6532at2157"/>
<dbReference type="PhylomeDB" id="Q9HHN8"/>
<dbReference type="UniPathway" id="UPA00391"/>
<dbReference type="Proteomes" id="UP000000554">
    <property type="component" value="Plasmid pNRC200"/>
</dbReference>
<dbReference type="GO" id="GO:0005524">
    <property type="term" value="F:ATP binding"/>
    <property type="evidence" value="ECO:0007669"/>
    <property type="project" value="UniProtKB-UniRule"/>
</dbReference>
<dbReference type="GO" id="GO:0016879">
    <property type="term" value="F:ligase activity, forming carbon-nitrogen bonds"/>
    <property type="evidence" value="ECO:0007669"/>
    <property type="project" value="UniProtKB-UniRule"/>
</dbReference>
<dbReference type="GO" id="GO:0008270">
    <property type="term" value="F:zinc ion binding"/>
    <property type="evidence" value="ECO:0007669"/>
    <property type="project" value="UniProtKB-UniRule"/>
</dbReference>
<dbReference type="CDD" id="cd01995">
    <property type="entry name" value="QueC-like"/>
    <property type="match status" value="1"/>
</dbReference>
<dbReference type="Gene3D" id="3.40.50.620">
    <property type="entry name" value="HUPs"/>
    <property type="match status" value="1"/>
</dbReference>
<dbReference type="HAMAP" id="MF_01633">
    <property type="entry name" value="QueC"/>
    <property type="match status" value="1"/>
</dbReference>
<dbReference type="InterPro" id="IPR018317">
    <property type="entry name" value="QueC"/>
</dbReference>
<dbReference type="InterPro" id="IPR001763">
    <property type="entry name" value="Rhodanese-like_dom"/>
</dbReference>
<dbReference type="InterPro" id="IPR014729">
    <property type="entry name" value="Rossmann-like_a/b/a_fold"/>
</dbReference>
<dbReference type="NCBIfam" id="TIGR00364">
    <property type="entry name" value="7-cyano-7-deazaguanine synthase QueC"/>
    <property type="match status" value="1"/>
</dbReference>
<dbReference type="PANTHER" id="PTHR42914">
    <property type="entry name" value="7-CYANO-7-DEAZAGUANINE SYNTHASE"/>
    <property type="match status" value="1"/>
</dbReference>
<dbReference type="PANTHER" id="PTHR42914:SF1">
    <property type="entry name" value="7-CYANO-7-DEAZAGUANINE SYNTHASE"/>
    <property type="match status" value="1"/>
</dbReference>
<dbReference type="Pfam" id="PF06508">
    <property type="entry name" value="QueC"/>
    <property type="match status" value="1"/>
</dbReference>
<dbReference type="PIRSF" id="PIRSF006293">
    <property type="entry name" value="ExsB"/>
    <property type="match status" value="1"/>
</dbReference>
<dbReference type="SUPFAM" id="SSF52402">
    <property type="entry name" value="Adenine nucleotide alpha hydrolases-like"/>
    <property type="match status" value="1"/>
</dbReference>
<reference key="1">
    <citation type="journal article" date="2000" name="Proc. Natl. Acad. Sci. U.S.A.">
        <title>Genome sequence of Halobacterium species NRC-1.</title>
        <authorList>
            <person name="Ng W.V."/>
            <person name="Kennedy S.P."/>
            <person name="Mahairas G.G."/>
            <person name="Berquist B."/>
            <person name="Pan M."/>
            <person name="Shukla H.D."/>
            <person name="Lasky S.R."/>
            <person name="Baliga N.S."/>
            <person name="Thorsson V."/>
            <person name="Sbrogna J."/>
            <person name="Swartzell S."/>
            <person name="Weir D."/>
            <person name="Hall J."/>
            <person name="Dahl T.A."/>
            <person name="Welti R."/>
            <person name="Goo Y.A."/>
            <person name="Leithauser B."/>
            <person name="Keller K."/>
            <person name="Cruz R."/>
            <person name="Danson M.J."/>
            <person name="Hough D.W."/>
            <person name="Maddocks D.G."/>
            <person name="Jablonski P.E."/>
            <person name="Krebs M.P."/>
            <person name="Angevine C.M."/>
            <person name="Dale H."/>
            <person name="Isenbarger T.A."/>
            <person name="Peck R.F."/>
            <person name="Pohlschroder M."/>
            <person name="Spudich J.L."/>
            <person name="Jung K.-H."/>
            <person name="Alam M."/>
            <person name="Freitas T."/>
            <person name="Hou S."/>
            <person name="Daniels C.J."/>
            <person name="Dennis P.P."/>
            <person name="Omer A.D."/>
            <person name="Ebhardt H."/>
            <person name="Lowe T.M."/>
            <person name="Liang P."/>
            <person name="Riley M."/>
            <person name="Hood L."/>
            <person name="DasSarma S."/>
        </authorList>
    </citation>
    <scope>NUCLEOTIDE SEQUENCE [LARGE SCALE GENOMIC DNA]</scope>
    <source>
        <strain>ATCC 700922 / JCM 11081 / NRC-1</strain>
    </source>
</reference>
<gene>
    <name evidence="1" type="primary">queC</name>
    <name type="ordered locus">VNG_6303G</name>
</gene>
<proteinExistence type="inferred from homology"/>
<accession>Q9HHN8</accession>
<organism>
    <name type="scientific">Halobacterium salinarum (strain ATCC 700922 / JCM 11081 / NRC-1)</name>
    <name type="common">Halobacterium halobium</name>
    <dbReference type="NCBI Taxonomy" id="64091"/>
    <lineage>
        <taxon>Archaea</taxon>
        <taxon>Methanobacteriati</taxon>
        <taxon>Methanobacteriota</taxon>
        <taxon>Stenosarchaea group</taxon>
        <taxon>Halobacteria</taxon>
        <taxon>Halobacteriales</taxon>
        <taxon>Halobacteriaceae</taxon>
        <taxon>Halobacterium</taxon>
        <taxon>Halobacterium salinarum NRC-34001</taxon>
    </lineage>
</organism>
<sequence>MSAKRAVVLASGGMDSATAAAVAHNAGYEVYMLHTSYGQQTEHKEHECATAQAAALGAADFLHLTTDHLSKIGASSLTDDEMAVADADMESDEIPTSYVPFRNANLLAMATSYAEANDCEAVFIGAHSEDFSGYPDCQPAFFEAFQQTVAAGTKPDTEISINAPFVDWSKTDIAERGLELGVPYEHTWSCYRAEAPACGTCDACAFRLQAFQNLGERDPIEYAERPSYT</sequence>
<evidence type="ECO:0000255" key="1">
    <source>
        <dbReference type="HAMAP-Rule" id="MF_01633"/>
    </source>
</evidence>
<keyword id="KW-0067">ATP-binding</keyword>
<keyword id="KW-0436">Ligase</keyword>
<keyword id="KW-0479">Metal-binding</keyword>
<keyword id="KW-0547">Nucleotide-binding</keyword>
<keyword id="KW-0614">Plasmid</keyword>
<keyword id="KW-1185">Reference proteome</keyword>
<keyword id="KW-0862">Zinc</keyword>